<reference key="1">
    <citation type="journal article" date="1990" name="J. Biol. Chem.">
        <title>Deficiency of the murine fifth complement component (C5). A 2-base pair gene deletion in a 5'-exon.</title>
        <authorList>
            <person name="Wetsel R.A."/>
            <person name="Fleischer D.T."/>
            <person name="Haviland D.L."/>
        </authorList>
    </citation>
    <scope>NUCLEOTIDE SEQUENCE [MRNA]</scope>
    <scope>INVOLVEMENT IN C5 DEFICIENCY</scope>
</reference>
<reference key="2">
    <citation type="journal article" date="2009" name="PLoS Biol.">
        <title>Lineage-specific biology revealed by a finished genome assembly of the mouse.</title>
        <authorList>
            <person name="Church D.M."/>
            <person name="Goodstadt L."/>
            <person name="Hillier L.W."/>
            <person name="Zody M.C."/>
            <person name="Goldstein S."/>
            <person name="She X."/>
            <person name="Bult C.J."/>
            <person name="Agarwala R."/>
            <person name="Cherry J.L."/>
            <person name="DiCuccio M."/>
            <person name="Hlavina W."/>
            <person name="Kapustin Y."/>
            <person name="Meric P."/>
            <person name="Maglott D."/>
            <person name="Birtle Z."/>
            <person name="Marques A.C."/>
            <person name="Graves T."/>
            <person name="Zhou S."/>
            <person name="Teague B."/>
            <person name="Potamousis K."/>
            <person name="Churas C."/>
            <person name="Place M."/>
            <person name="Herschleb J."/>
            <person name="Runnheim R."/>
            <person name="Forrest D."/>
            <person name="Amos-Landgraf J."/>
            <person name="Schwartz D.C."/>
            <person name="Cheng Z."/>
            <person name="Lindblad-Toh K."/>
            <person name="Eichler E.E."/>
            <person name="Ponting C.P."/>
        </authorList>
    </citation>
    <scope>NUCLEOTIDE SEQUENCE [LARGE SCALE GENOMIC DNA]</scope>
    <source>
        <strain>C57BL/6J</strain>
    </source>
</reference>
<reference key="3">
    <citation type="journal article" date="1987" name="Biochemistry">
        <title>Primary structure of the fifth component of murine complement.</title>
        <authorList>
            <person name="Wetsel R.A."/>
            <person name="Ogata R.T."/>
            <person name="Tack B.F."/>
        </authorList>
    </citation>
    <scope>NUCLEOTIDE SEQUENCE [MRNA] OF 41-1680</scope>
</reference>
<reference key="4">
    <citation type="journal article" date="1991" name="J. Biol. Chem.">
        <title>Structure of the murine fifth complement component (C5) gene. A large, highly interrupted gene with a variant donor splice site and organizational homology with the third and fourth complement component genes.</title>
        <authorList>
            <person name="Haviland D.L."/>
            <person name="Haviland J.C."/>
            <person name="Fleischer D.T."/>
            <person name="Wetsel R.A."/>
        </authorList>
    </citation>
    <scope>GENE STRUCTURE</scope>
</reference>
<reference key="5">
    <citation type="journal article" date="2006" name="J. Proteome Res.">
        <title>Proteome-wide characterization of N-glycosylation events by diagonal chromatography.</title>
        <authorList>
            <person name="Ghesquiere B."/>
            <person name="Van Damme J."/>
            <person name="Martens L."/>
            <person name="Vandekerckhove J."/>
            <person name="Gevaert K."/>
        </authorList>
    </citation>
    <scope>GLYCOSYLATION [LARGE SCALE ANALYSIS] AT ASN-427</scope>
    <source>
        <strain>C57BL/6J</strain>
        <tissue>Plasma</tissue>
    </source>
</reference>
<reference key="6">
    <citation type="journal article" date="2007" name="J. Proteome Res.">
        <title>Enhanced analysis of the mouse plasma proteome using cysteine-containing tryptic glycopeptides.</title>
        <authorList>
            <person name="Bernhard O.K."/>
            <person name="Kapp E.A."/>
            <person name="Simpson R.J."/>
        </authorList>
    </citation>
    <scope>GLYCOSYLATION [LARGE SCALE ANALYSIS] AT ASN-427</scope>
    <source>
        <strain>C57BL/6J</strain>
        <tissue>Plasma</tissue>
    </source>
</reference>
<reference key="7">
    <citation type="journal article" date="2010" name="Cell">
        <title>A tissue-specific atlas of mouse protein phosphorylation and expression.</title>
        <authorList>
            <person name="Huttlin E.L."/>
            <person name="Jedrychowski M.P."/>
            <person name="Elias J.E."/>
            <person name="Goswami T."/>
            <person name="Rad R."/>
            <person name="Beausoleil S.A."/>
            <person name="Villen J."/>
            <person name="Haas W."/>
            <person name="Sowa M.E."/>
            <person name="Gygi S.P."/>
        </authorList>
    </citation>
    <scope>IDENTIFICATION BY MASS SPECTROMETRY [LARGE SCALE ANALYSIS]</scope>
    <source>
        <tissue>Brown adipose tissue</tissue>
        <tissue>Heart</tissue>
        <tissue>Kidney</tissue>
        <tissue>Liver</tissue>
        <tissue>Lung</tissue>
        <tissue>Testis</tissue>
    </source>
</reference>
<keyword id="KW-0002">3D-structure</keyword>
<keyword id="KW-0165">Cleavage on pair of basic residues</keyword>
<keyword id="KW-0179">Complement alternate pathway</keyword>
<keyword id="KW-0180">Complement pathway</keyword>
<keyword id="KW-0204">Cytolysis</keyword>
<keyword id="KW-1015">Disulfide bond</keyword>
<keyword id="KW-0325">Glycoprotein</keyword>
<keyword id="KW-0391">Immunity</keyword>
<keyword id="KW-0395">Inflammatory response</keyword>
<keyword id="KW-0399">Innate immunity</keyword>
<keyword id="KW-0472">Membrane</keyword>
<keyword id="KW-0473">Membrane attack complex</keyword>
<keyword id="KW-1185">Reference proteome</keyword>
<keyword id="KW-0964">Secreted</keyword>
<keyword id="KW-0732">Signal</keyword>
<keyword id="KW-1052">Target cell membrane</keyword>
<keyword id="KW-1053">Target membrane</keyword>
<dbReference type="EMBL" id="M35525">
    <property type="protein sequence ID" value="AAA37349.1"/>
    <property type="molecule type" value="mRNA"/>
</dbReference>
<dbReference type="EMBL" id="M35526">
    <property type="protein sequence ID" value="AAA37348.1"/>
    <property type="molecule type" value="mRNA"/>
</dbReference>
<dbReference type="EMBL" id="AL845534">
    <property type="status" value="NOT_ANNOTATED_CDS"/>
    <property type="molecule type" value="Genomic_DNA"/>
</dbReference>
<dbReference type="CCDS" id="CCDS15957.1"/>
<dbReference type="PIR" id="A35530">
    <property type="entry name" value="C5MS"/>
</dbReference>
<dbReference type="RefSeq" id="NP_034536.2">
    <property type="nucleotide sequence ID" value="NM_010406.2"/>
</dbReference>
<dbReference type="PDB" id="4P3A">
    <property type="method" value="X-ray"/>
    <property type="resolution" value="1.40 A"/>
    <property type="chains" value="A/B/C/D=679-755"/>
</dbReference>
<dbReference type="PDB" id="4P3B">
    <property type="method" value="X-ray"/>
    <property type="resolution" value="2.10 A"/>
    <property type="chains" value="A/B/C/D=679-754"/>
</dbReference>
<dbReference type="PDB" id="4WB2">
    <property type="method" value="X-ray"/>
    <property type="resolution" value="1.80 A"/>
    <property type="chains" value="A/B/C=679-755"/>
</dbReference>
<dbReference type="PDB" id="4WB3">
    <property type="method" value="X-ray"/>
    <property type="resolution" value="2.00 A"/>
    <property type="chains" value="A/B/C=679-754"/>
</dbReference>
<dbReference type="PDBsum" id="4P3A"/>
<dbReference type="PDBsum" id="4P3B"/>
<dbReference type="PDBsum" id="4WB2"/>
<dbReference type="PDBsum" id="4WB3"/>
<dbReference type="EMDB" id="EMD-36750"/>
<dbReference type="SMR" id="P06684"/>
<dbReference type="BioGRID" id="200226">
    <property type="interactions" value="4"/>
</dbReference>
<dbReference type="ComplexPortal" id="CPX-6202">
    <property type="entry name" value="Membrane attack complex"/>
</dbReference>
<dbReference type="FunCoup" id="P06684">
    <property type="interactions" value="438"/>
</dbReference>
<dbReference type="IntAct" id="P06684">
    <property type="interactions" value="3"/>
</dbReference>
<dbReference type="STRING" id="10090.ENSMUSP00000028233"/>
<dbReference type="MEROPS" id="I39.952"/>
<dbReference type="GlyCosmos" id="P06684">
    <property type="glycosylation" value="4 sites, No reported glycans"/>
</dbReference>
<dbReference type="GlyGen" id="P06684">
    <property type="glycosylation" value="6 sites, 1 N-linked glycan (1 site), 1 O-linked glycan (1 site)"/>
</dbReference>
<dbReference type="iPTMnet" id="P06684"/>
<dbReference type="PhosphoSitePlus" id="P06684"/>
<dbReference type="CPTAC" id="non-CPTAC-3698"/>
<dbReference type="CPTAC" id="non-CPTAC-4025"/>
<dbReference type="jPOST" id="P06684"/>
<dbReference type="PaxDb" id="10090-ENSMUSP00000028233"/>
<dbReference type="PeptideAtlas" id="P06684"/>
<dbReference type="ProteomicsDB" id="283598"/>
<dbReference type="ABCD" id="P06684">
    <property type="antibodies" value="2 sequenced antibodies"/>
</dbReference>
<dbReference type="Antibodypedia" id="15836">
    <property type="antibodies" value="977 antibodies from 44 providers"/>
</dbReference>
<dbReference type="DNASU" id="15139"/>
<dbReference type="Ensembl" id="ENSMUST00000028233.7">
    <property type="protein sequence ID" value="ENSMUSP00000028233.4"/>
    <property type="gene ID" value="ENSMUSG00000026874.11"/>
</dbReference>
<dbReference type="GeneID" id="15139"/>
<dbReference type="KEGG" id="mmu:15139"/>
<dbReference type="UCSC" id="uc008jjn.2">
    <property type="organism name" value="mouse"/>
</dbReference>
<dbReference type="AGR" id="MGI:96031"/>
<dbReference type="CTD" id="15139"/>
<dbReference type="MGI" id="MGI:96031">
    <property type="gene designation" value="Hc"/>
</dbReference>
<dbReference type="VEuPathDB" id="HostDB:ENSMUSG00000026874"/>
<dbReference type="eggNOG" id="KOG1366">
    <property type="taxonomic scope" value="Eukaryota"/>
</dbReference>
<dbReference type="GeneTree" id="ENSGT00940000155670"/>
<dbReference type="HOGENOM" id="CLU_001634_4_2_1"/>
<dbReference type="InParanoid" id="P06684"/>
<dbReference type="OMA" id="YKRIIAC"/>
<dbReference type="OrthoDB" id="6359008at2759"/>
<dbReference type="PhylomeDB" id="P06684"/>
<dbReference type="TreeFam" id="TF313285"/>
<dbReference type="Reactome" id="R-MMU-166665">
    <property type="pathway name" value="Terminal pathway of complement"/>
</dbReference>
<dbReference type="Reactome" id="R-MMU-174577">
    <property type="pathway name" value="Activation of C3 and C5"/>
</dbReference>
<dbReference type="Reactome" id="R-MMU-375276">
    <property type="pathway name" value="Peptide ligand-binding receptors"/>
</dbReference>
<dbReference type="Reactome" id="R-MMU-418594">
    <property type="pathway name" value="G alpha (i) signalling events"/>
</dbReference>
<dbReference type="Reactome" id="R-MMU-977606">
    <property type="pathway name" value="Regulation of Complement cascade"/>
</dbReference>
<dbReference type="BioGRID-ORCS" id="15139">
    <property type="hits" value="3 hits in 77 CRISPR screens"/>
</dbReference>
<dbReference type="ChiTaRS" id="Hc">
    <property type="organism name" value="mouse"/>
</dbReference>
<dbReference type="EvolutionaryTrace" id="P06684"/>
<dbReference type="PRO" id="PR:P06684"/>
<dbReference type="Proteomes" id="UP000000589">
    <property type="component" value="Chromosome 2"/>
</dbReference>
<dbReference type="RNAct" id="P06684">
    <property type="molecule type" value="protein"/>
</dbReference>
<dbReference type="Bgee" id="ENSMUSG00000026874">
    <property type="expression patterns" value="Expressed in left lobe of liver and 55 other cell types or tissues"/>
</dbReference>
<dbReference type="ExpressionAtlas" id="P06684">
    <property type="expression patterns" value="baseline and differential"/>
</dbReference>
<dbReference type="GO" id="GO:0005615">
    <property type="term" value="C:extracellular space"/>
    <property type="evidence" value="ECO:0007669"/>
    <property type="project" value="InterPro"/>
</dbReference>
<dbReference type="GO" id="GO:0005579">
    <property type="term" value="C:membrane attack complex"/>
    <property type="evidence" value="ECO:0007669"/>
    <property type="project" value="UniProtKB-KW"/>
</dbReference>
<dbReference type="GO" id="GO:0004866">
    <property type="term" value="F:endopeptidase inhibitor activity"/>
    <property type="evidence" value="ECO:0007669"/>
    <property type="project" value="InterPro"/>
</dbReference>
<dbReference type="GO" id="GO:0006957">
    <property type="term" value="P:complement activation, alternative pathway"/>
    <property type="evidence" value="ECO:0007669"/>
    <property type="project" value="UniProtKB-KW"/>
</dbReference>
<dbReference type="GO" id="GO:0006958">
    <property type="term" value="P:complement activation, classical pathway"/>
    <property type="evidence" value="ECO:0007669"/>
    <property type="project" value="UniProtKB-KW"/>
</dbReference>
<dbReference type="GO" id="GO:0001701">
    <property type="term" value="P:in utero embryonic development"/>
    <property type="evidence" value="ECO:0000316"/>
    <property type="project" value="MGI"/>
</dbReference>
<dbReference type="GO" id="GO:0006954">
    <property type="term" value="P:inflammatory response"/>
    <property type="evidence" value="ECO:0007669"/>
    <property type="project" value="UniProtKB-KW"/>
</dbReference>
<dbReference type="GO" id="GO:0031640">
    <property type="term" value="P:killing of cells of another organism"/>
    <property type="evidence" value="ECO:0007669"/>
    <property type="project" value="UniProtKB-KW"/>
</dbReference>
<dbReference type="GO" id="GO:0045766">
    <property type="term" value="P:positive regulation of angiogenesis"/>
    <property type="evidence" value="ECO:0000315"/>
    <property type="project" value="BHF-UCL"/>
</dbReference>
<dbReference type="CDD" id="cd00017">
    <property type="entry name" value="ANATO"/>
    <property type="match status" value="1"/>
</dbReference>
<dbReference type="CDD" id="cd02896">
    <property type="entry name" value="complement_C3_C4_C5"/>
    <property type="match status" value="1"/>
</dbReference>
<dbReference type="FunFam" id="1.20.91.20:FF:000004">
    <property type="entry name" value="Complement C5"/>
    <property type="match status" value="1"/>
</dbReference>
<dbReference type="FunFam" id="2.60.40.1940:FF:000001">
    <property type="entry name" value="Complement component C3"/>
    <property type="match status" value="1"/>
</dbReference>
<dbReference type="FunFam" id="2.20.130.20:FF:000008">
    <property type="entry name" value="Complement component C5"/>
    <property type="match status" value="1"/>
</dbReference>
<dbReference type="FunFam" id="2.60.40.10:FF:001848">
    <property type="entry name" value="Complement component C5"/>
    <property type="match status" value="1"/>
</dbReference>
<dbReference type="Gene3D" id="1.50.10.20">
    <property type="match status" value="1"/>
</dbReference>
<dbReference type="Gene3D" id="2.20.130.20">
    <property type="match status" value="1"/>
</dbReference>
<dbReference type="Gene3D" id="2.40.50.120">
    <property type="match status" value="1"/>
</dbReference>
<dbReference type="Gene3D" id="2.60.120.1540">
    <property type="match status" value="1"/>
</dbReference>
<dbReference type="Gene3D" id="2.60.40.1930">
    <property type="match status" value="3"/>
</dbReference>
<dbReference type="Gene3D" id="2.60.40.1940">
    <property type="match status" value="1"/>
</dbReference>
<dbReference type="Gene3D" id="6.20.50.160">
    <property type="match status" value="1"/>
</dbReference>
<dbReference type="Gene3D" id="2.60.40.690">
    <property type="entry name" value="Alpha-macroglobulin, receptor-binding domain"/>
    <property type="match status" value="1"/>
</dbReference>
<dbReference type="Gene3D" id="1.20.91.20">
    <property type="entry name" value="Anaphylotoxins (complement system)"/>
    <property type="match status" value="1"/>
</dbReference>
<dbReference type="Gene3D" id="2.60.40.10">
    <property type="entry name" value="Immunoglobulins"/>
    <property type="match status" value="2"/>
</dbReference>
<dbReference type="InterPro" id="IPR009048">
    <property type="entry name" value="A-macroglobulin_rcpt-bd"/>
</dbReference>
<dbReference type="InterPro" id="IPR036595">
    <property type="entry name" value="A-macroglobulin_rcpt-bd_sf"/>
</dbReference>
<dbReference type="InterPro" id="IPR050473">
    <property type="entry name" value="A2M/Complement_sys"/>
</dbReference>
<dbReference type="InterPro" id="IPR011625">
    <property type="entry name" value="A2M_N_BRD"/>
</dbReference>
<dbReference type="InterPro" id="IPR011626">
    <property type="entry name" value="Alpha-macroglobulin_TED"/>
</dbReference>
<dbReference type="InterPro" id="IPR000020">
    <property type="entry name" value="Anaphylatoxin/fibulin"/>
</dbReference>
<dbReference type="InterPro" id="IPR018081">
    <property type="entry name" value="Anaphylatoxin_comp_syst"/>
</dbReference>
<dbReference type="InterPro" id="IPR041425">
    <property type="entry name" value="C3/4/5_MG1"/>
</dbReference>
<dbReference type="InterPro" id="IPR048843">
    <property type="entry name" value="C5_CUB"/>
</dbReference>
<dbReference type="InterPro" id="IPR013783">
    <property type="entry name" value="Ig-like_fold"/>
</dbReference>
<dbReference type="InterPro" id="IPR001599">
    <property type="entry name" value="Macroglobln_a2"/>
</dbReference>
<dbReference type="InterPro" id="IPR002890">
    <property type="entry name" value="MG2"/>
</dbReference>
<dbReference type="InterPro" id="IPR041555">
    <property type="entry name" value="MG3"/>
</dbReference>
<dbReference type="InterPro" id="IPR040839">
    <property type="entry name" value="MG4"/>
</dbReference>
<dbReference type="InterPro" id="IPR001134">
    <property type="entry name" value="Netrin_domain"/>
</dbReference>
<dbReference type="InterPro" id="IPR018933">
    <property type="entry name" value="Netrin_module_non-TIMP"/>
</dbReference>
<dbReference type="InterPro" id="IPR008930">
    <property type="entry name" value="Terpenoid_cyclase/PrenylTrfase"/>
</dbReference>
<dbReference type="InterPro" id="IPR008993">
    <property type="entry name" value="TIMP-like_OB-fold"/>
</dbReference>
<dbReference type="PANTHER" id="PTHR11412:SF83">
    <property type="entry name" value="COMPLEMENT C5"/>
    <property type="match status" value="1"/>
</dbReference>
<dbReference type="PANTHER" id="PTHR11412">
    <property type="entry name" value="MACROGLOBULIN / COMPLEMENT"/>
    <property type="match status" value="1"/>
</dbReference>
<dbReference type="Pfam" id="PF00207">
    <property type="entry name" value="A2M"/>
    <property type="match status" value="1"/>
</dbReference>
<dbReference type="Pfam" id="PF07703">
    <property type="entry name" value="A2M_BRD"/>
    <property type="match status" value="1"/>
</dbReference>
<dbReference type="Pfam" id="PF07677">
    <property type="entry name" value="A2M_recep"/>
    <property type="match status" value="1"/>
</dbReference>
<dbReference type="Pfam" id="PF01821">
    <property type="entry name" value="ANATO"/>
    <property type="match status" value="1"/>
</dbReference>
<dbReference type="Pfam" id="PF21309">
    <property type="entry name" value="C5_CUB"/>
    <property type="match status" value="1"/>
</dbReference>
<dbReference type="Pfam" id="PF17790">
    <property type="entry name" value="MG1"/>
    <property type="match status" value="1"/>
</dbReference>
<dbReference type="Pfam" id="PF01835">
    <property type="entry name" value="MG2"/>
    <property type="match status" value="1"/>
</dbReference>
<dbReference type="Pfam" id="PF17791">
    <property type="entry name" value="MG3"/>
    <property type="match status" value="1"/>
</dbReference>
<dbReference type="Pfam" id="PF17789">
    <property type="entry name" value="MG4"/>
    <property type="match status" value="1"/>
</dbReference>
<dbReference type="Pfam" id="PF01759">
    <property type="entry name" value="NTR"/>
    <property type="match status" value="1"/>
</dbReference>
<dbReference type="Pfam" id="PF07678">
    <property type="entry name" value="TED_complement"/>
    <property type="match status" value="1"/>
</dbReference>
<dbReference type="SMART" id="SM01360">
    <property type="entry name" value="A2M"/>
    <property type="match status" value="1"/>
</dbReference>
<dbReference type="SMART" id="SM01359">
    <property type="entry name" value="A2M_N_2"/>
    <property type="match status" value="1"/>
</dbReference>
<dbReference type="SMART" id="SM01361">
    <property type="entry name" value="A2M_recep"/>
    <property type="match status" value="1"/>
</dbReference>
<dbReference type="SMART" id="SM00104">
    <property type="entry name" value="ANATO"/>
    <property type="match status" value="1"/>
</dbReference>
<dbReference type="SMART" id="SM00643">
    <property type="entry name" value="C345C"/>
    <property type="match status" value="1"/>
</dbReference>
<dbReference type="SUPFAM" id="SSF49410">
    <property type="entry name" value="Alpha-macroglobulin receptor domain"/>
    <property type="match status" value="1"/>
</dbReference>
<dbReference type="SUPFAM" id="SSF47686">
    <property type="entry name" value="Anaphylotoxins (complement system)"/>
    <property type="match status" value="1"/>
</dbReference>
<dbReference type="SUPFAM" id="SSF48239">
    <property type="entry name" value="Terpenoid cyclases/Protein prenyltransferases"/>
    <property type="match status" value="1"/>
</dbReference>
<dbReference type="SUPFAM" id="SSF50242">
    <property type="entry name" value="TIMP-like"/>
    <property type="match status" value="1"/>
</dbReference>
<dbReference type="PROSITE" id="PS01177">
    <property type="entry name" value="ANAPHYLATOXIN_1"/>
    <property type="match status" value="1"/>
</dbReference>
<dbReference type="PROSITE" id="PS01178">
    <property type="entry name" value="ANAPHYLATOXIN_2"/>
    <property type="match status" value="1"/>
</dbReference>
<dbReference type="PROSITE" id="PS50189">
    <property type="entry name" value="NTR"/>
    <property type="match status" value="1"/>
</dbReference>
<organism>
    <name type="scientific">Mus musculus</name>
    <name type="common">Mouse</name>
    <dbReference type="NCBI Taxonomy" id="10090"/>
    <lineage>
        <taxon>Eukaryota</taxon>
        <taxon>Metazoa</taxon>
        <taxon>Chordata</taxon>
        <taxon>Craniata</taxon>
        <taxon>Vertebrata</taxon>
        <taxon>Euteleostomi</taxon>
        <taxon>Mammalia</taxon>
        <taxon>Eutheria</taxon>
        <taxon>Euarchontoglires</taxon>
        <taxon>Glires</taxon>
        <taxon>Rodentia</taxon>
        <taxon>Myomorpha</taxon>
        <taxon>Muroidea</taxon>
        <taxon>Muridae</taxon>
        <taxon>Murinae</taxon>
        <taxon>Mus</taxon>
        <taxon>Mus</taxon>
    </lineage>
</organism>
<sequence>MGLWGILCLLIFLDKTWGQEQTYVISAPKILRVGSSENVVIQVHGYTEAFDATLSLKSYPDKKVTFSSGYVNLSPENKFQNAALLTLQPNQVPREESPVSHVYLEVVSKHFSKSKKIPITYNNGILFIHTDKPVYTPDQSVKIRVYSLGDDLKPAKRETVLTFIDPEGSEVDIVEENDYTGIISFPDFKIPSNPKYGVWTIKANYKKDFTTTGTAYFEIKEYVLPRFSVSIELERTFIGYKNFKNFEITVKARYFYNKVVPDAEVYAFFGLREDIKDEEKQMMHKATQAAKLVDGVAQISFDSETAVKELSYNSLEDLNNKYLYIAVTVTESSGGFSEEAEIPGVKYVLSPYTLNLVATPLFVKPGIPFSIKAQVKDSLEQAVGGVPVTLMAQTVDVNQETSDLETKRSITHDTDGVAVFVLNLPSNVTVLKFEIRTDDPELPEENQASKEYEAVAYSSLSQSYIYIAWTENYKPMLVGEYLNIMVTPKSPYIDKITHYNYLILSKGKIVQYGTREKLFSSTYQNINIPVTQNMVPSARLLVYYIVTGEQTAELVADAVWINIEEKCGNQLQVHLSPDEYVYSPGQTVSLDMVTEADSWVALSAVDRAVYKVQGNAKRAMQRVFQALDEKSDLGCGAGGGHDNADVFHLAGLTFLTNANADDSHYRDDSCKEILRSKRNLHLLRQKIEEQAAKYKHSVPKKCCYDGARVNFYETCEERVARVTIGPLCIRAFNECCTIANKIRKESPHKPVQLGRIHIKTLLPVMKADIRSYFPESWLWEIHRVPKRKQLQVTLPDSLTTWEIQGIGISDNGICVADTLKAKVFKEVFLEMNIPYSVVRGEQIQLKGTVYNYMTSGTKFCVKMSAVEGICTSGSSAASLHTSRPSRCVFQRIEGSSSHLVTFTLLPLEIGLHSINFSLETSFGKDILVKTLRVVPEGVKRESYAGVILDPKGIRGIVNRRKEFPYRIPLDLVPKTKVERILSVKGLLVGEFLSTVLSKEGINILTHLPKGSAEAELMSIAPVFYVFHYLEAGNHWNIFYPDTLSKRQSLEKKIKQGVVSVMSYRNADYSYSMWKGASASTWLTAFALRVLGQVAKYVKQDENSICNSLLWLVEKCQLENGSFKENSQYLPIKLQGTLPAEAQEKTLYLTAFSVIGIRKAVDICPTMKIHTALDKADSFLLENTLPSKSTFTLAIVAYALSLGDRTHPRFRLIVSALRKEAFVKGDPPIYRYWRDTLKRPDSSVPSSGTAGMVETTAYALLASLKLKDMNYANPIIKWLSEEQRYGGGFYSTQDTINAIEGLTEYSLLLKQIHLDMDINVAYKHEGDFHKYKVTEKHFLGRPVEVSLNDDLVVSTGYSSGLATVYVKTVVHKISVSEEFCSFYLKIDTQDIEASSHFRLSDSGFKRIIACASYKPSKEESTSGSSHAVMDISLPTGIGANEEDLRALVEGVDQLLTDYQIKDGHVILQLNSIPSRDFLCVRFRIFELFQVGFLNPATFTVYEYHRPDKQCTMIYSISDTRLQKVCEGAACTCVEADCAQLQAEVDLAISADSRKEKACKPETAYAYKVRITSATEENVFVKYTATLLVTYKTGEAADENSEVTFIKKMSCTNANLVKGKQYLIMGKEVLQIKHNFSFKYIYPLDSSTWIEYWPTDTTCPSCQAFVENLNNFAEDLFLNSCE</sequence>
<proteinExistence type="evidence at protein level"/>
<name>CO5_MOUSE</name>
<evidence type="ECO:0000250" key="1">
    <source>
        <dbReference type="UniProtKB" id="P01031"/>
    </source>
</evidence>
<evidence type="ECO:0000255" key="2"/>
<evidence type="ECO:0000255" key="3">
    <source>
        <dbReference type="PROSITE-ProRule" id="PRU00022"/>
    </source>
</evidence>
<evidence type="ECO:0000255" key="4">
    <source>
        <dbReference type="PROSITE-ProRule" id="PRU00295"/>
    </source>
</evidence>
<evidence type="ECO:0000269" key="5">
    <source>
    </source>
</evidence>
<evidence type="ECO:0000269" key="6">
    <source>
    </source>
</evidence>
<evidence type="ECO:0000269" key="7">
    <source>
    </source>
</evidence>
<evidence type="ECO:0007829" key="8">
    <source>
        <dbReference type="PDB" id="4P3A"/>
    </source>
</evidence>
<evidence type="ECO:0007829" key="9">
    <source>
        <dbReference type="PDB" id="4WB2"/>
    </source>
</evidence>
<protein>
    <recommendedName>
        <fullName>Complement C5</fullName>
    </recommendedName>
    <alternativeName>
        <fullName>Hemolytic complement</fullName>
    </alternativeName>
    <component>
        <recommendedName>
            <fullName>Complement C5 beta chain</fullName>
        </recommendedName>
    </component>
    <component>
        <recommendedName>
            <fullName>Complement C5 alpha chain</fullName>
        </recommendedName>
    </component>
    <component>
        <recommendedName>
            <fullName>C5a anaphylatoxin</fullName>
        </recommendedName>
    </component>
    <component>
        <recommendedName>
            <fullName>Complement C5b</fullName>
        </recommendedName>
        <alternativeName>
            <fullName>Complement C5 alpha' chain</fullName>
        </alternativeName>
    </component>
</protein>
<feature type="signal peptide">
    <location>
        <begin position="1"/>
        <end position="18"/>
    </location>
</feature>
<feature type="chain" id="PRO_0000005991" description="Complement C5 beta chain">
    <location>
        <begin position="19"/>
        <end position="674"/>
    </location>
</feature>
<feature type="propeptide" id="PRO_0000005992">
    <location>
        <begin position="675"/>
        <end position="678"/>
    </location>
</feature>
<feature type="chain" id="PRO_0000005993" description="Complement C5 alpha chain">
    <location>
        <begin position="679"/>
        <end position="1680"/>
    </location>
</feature>
<feature type="chain" id="PRO_0000005994" description="C5a anaphylatoxin">
    <location>
        <begin position="679"/>
        <end position="755"/>
    </location>
</feature>
<feature type="chain" id="PRO_0000005995" description="Complement C5b">
    <location>
        <begin position="756"/>
        <end position="1680"/>
    </location>
</feature>
<feature type="domain" description="Anaphylatoxin-like" evidence="3">
    <location>
        <begin position="702"/>
        <end position="736"/>
    </location>
</feature>
<feature type="domain" description="NTR" evidence="4">
    <location>
        <begin position="1536"/>
        <end position="1679"/>
    </location>
</feature>
<feature type="region of interest" description="Involved in C5AR1 binding" evidence="1">
    <location>
        <begin position="696"/>
        <end position="725"/>
    </location>
</feature>
<feature type="site" description="Cleavage; by C5 convertase" evidence="1">
    <location>
        <begin position="755"/>
        <end position="756"/>
    </location>
</feature>
<feature type="glycosylation site" description="N-linked (GlcNAc...) asparagine" evidence="5 6">
    <location>
        <position position="427"/>
    </location>
</feature>
<feature type="glycosylation site" description="N-linked (GlcNAc...) asparagine" evidence="2">
    <location>
        <position position="915"/>
    </location>
</feature>
<feature type="glycosylation site" description="N-linked (GlcNAc...) asparagine" evidence="2">
    <location>
        <position position="1119"/>
    </location>
</feature>
<feature type="glycosylation site" description="N-linked (GlcNAc...) asparagine" evidence="2">
    <location>
        <position position="1633"/>
    </location>
</feature>
<feature type="disulfide bond" evidence="1">
    <location>
        <begin position="567"/>
        <end position="814"/>
    </location>
</feature>
<feature type="disulfide bond" evidence="1">
    <location>
        <begin position="635"/>
        <end position="670"/>
    </location>
</feature>
<feature type="disulfide bond" evidence="1">
    <location>
        <begin position="702"/>
        <end position="728"/>
    </location>
</feature>
<feature type="disulfide bond" evidence="1">
    <location>
        <begin position="703"/>
        <end position="735"/>
    </location>
</feature>
<feature type="disulfide bond" evidence="1">
    <location>
        <begin position="715"/>
        <end position="736"/>
    </location>
</feature>
<feature type="disulfide bond" evidence="1">
    <location>
        <begin position="860"/>
        <end position="887"/>
    </location>
</feature>
<feature type="disulfide bond" evidence="1">
    <location>
        <begin position="870"/>
        <end position="1531"/>
    </location>
</feature>
<feature type="disulfide bond" evidence="1">
    <location>
        <begin position="1105"/>
        <end position="1163"/>
    </location>
</feature>
<feature type="disulfide bond" evidence="1">
    <location>
        <begin position="1379"/>
        <end position="1509"/>
    </location>
</feature>
<feature type="disulfide bond" evidence="1">
    <location>
        <begin position="1409"/>
        <end position="1478"/>
    </location>
</feature>
<feature type="disulfide bond" evidence="1">
    <location>
        <begin position="1524"/>
        <end position="1529"/>
    </location>
</feature>
<feature type="disulfide bond" evidence="1">
    <location>
        <begin position="1536"/>
        <end position="1609"/>
    </location>
</feature>
<feature type="disulfide bond" evidence="1">
    <location>
        <begin position="1557"/>
        <end position="1679"/>
    </location>
</feature>
<feature type="disulfide bond" evidence="1">
    <location>
        <begin position="1657"/>
        <end position="1660"/>
    </location>
</feature>
<feature type="helix" evidence="8">
    <location>
        <begin position="680"/>
        <end position="691"/>
    </location>
</feature>
<feature type="strand" evidence="8">
    <location>
        <begin position="694"/>
        <end position="696"/>
    </location>
</feature>
<feature type="helix" evidence="8">
    <location>
        <begin position="697"/>
        <end position="707"/>
    </location>
</feature>
<feature type="strand" evidence="9">
    <location>
        <begin position="711"/>
        <end position="713"/>
    </location>
</feature>
<feature type="helix" evidence="8">
    <location>
        <begin position="715"/>
        <end position="719"/>
    </location>
</feature>
<feature type="helix" evidence="8">
    <location>
        <begin position="726"/>
        <end position="744"/>
    </location>
</feature>
<accession>P06684</accession>
<accession>A2AS36</accession>
<comment type="function">
    <text evidence="1">Precursor of the C5a anaphylatoxin and complement C5b components of the complement pathways, which consist in a cascade of proteins that leads to phagocytosis and breakdown of pathogens and signaling that strengthens the adaptive immune system. Activated downstream of classical, alternative, lectin and GZMK complement pathways.</text>
</comment>
<comment type="function">
    <molecule>Complement C5b</molecule>
    <text evidence="1">Component of the membrane attack complex (MAC), a multiprotein complex activated by the complement cascade, which inserts into a target cell membrane and forms a pore, leading to target cell membrane rupture and cell lysis. Complement C5b is generated following cleavage by C5 convertase and initiates formation of the MAC complex: C5b binds sequentially C6, C7, C8 and multiple copies of the pore-forming subunit C9. During MAC complex assembly, the C5b6 subcomplex, composed of complement C5b and C6, associates with the outer leaflet of target cell membrane, reducing the energy for membrane bending.</text>
</comment>
<comment type="function">
    <molecule>C5a anaphylatoxin</molecule>
    <text evidence="1">Mediator of local inflammatory process released following cleavage by C5 convertase. Acts by binding to its receptor (C5AR1 or C5AR2), activating G protein-coupled receptor signaling and inducing a variety of responses including intracellular calcium release, contraction of smooth muscle, increased vascular permeability, and histamine release from mast cells and basophilic leukocytes. C5a is also a potent chemokine which stimulates the locomotion of polymorphonuclear leukocytes and directs their migration toward sites of inflammation.</text>
</comment>
<comment type="activity regulation">
    <molecule>Complement C5b</molecule>
    <text evidence="1">Membrane attack complex (MAC) assembly is inhibited by CD59, thereby protecting self-cells from damage during complement activation. MAC assembly is also inhibited by clusterin (CLU) chaperones that inhibit polymerization of C9.</text>
</comment>
<comment type="subunit">
    <text evidence="1">In absence of complement activation, the C5 precursor is first processed by the removal of 4 basic residues, forming two chains, beta and alpha, linked by a disulfide bond.</text>
</comment>
<comment type="subunit">
    <molecule>Complement C5b</molecule>
    <text evidence="1">Complement C5b is composed of complement C5b and complement C5 beta chains that are associated via disulfide bonds. Component of the membrane attack complex (MAC), composed of complement C5b, C6, C7, C8A, C8B, C8G and multiple copies of the pore-forming subunit C9. Interacts with the tick complement inhibitors OmCI, RaCI1 and CirpT1. Interacts with cobra venom factor (CVF).</text>
</comment>
<comment type="subcellular location">
    <subcellularLocation>
        <location evidence="1">Secreted</location>
    </subcellularLocation>
</comment>
<comment type="subcellular location">
    <molecule>Complement C5b</molecule>
    <subcellularLocation>
        <location evidence="1">Secreted</location>
    </subcellularLocation>
    <subcellularLocation>
        <location evidence="1">Target cell membrane</location>
    </subcellularLocation>
    <text evidence="1">Secreted as soluble protein. Inserts into the cell membrane of target cells.</text>
</comment>
<comment type="subcellular location">
    <molecule>C5a anaphylatoxin</molecule>
    <subcellularLocation>
        <location evidence="1">Secreted</location>
    </subcellularLocation>
</comment>
<comment type="PTM">
    <text evidence="1">C5 precursor is first processed by the removal of 4 basic residues, forming two chains, beta and alpha, linked by a disulfide bond. During activation of the complement systems, the alpha chain is cleaved into C5a and C5b by the C5 convertase: C5b stays linked to the beta chain, while C5a is released in the plasma. The alpha chain is cleaved by the serine protease complement C2b component of the C5 convertase to generate C5a and C5b following activation by the classical, lectin and GZMK complement systems. The alpha chain is cleaved by CFB component of the C5 convertase to generate C5a and C5b following activation by the alternative complement system.</text>
</comment>
<comment type="disease">
    <text evidence="7">Murine C5 deficiency is caused by a 2 base-pairs deletion resulting in frameshift and premature truncation. All C5-deficient strains contain this mutation.</text>
</comment>
<gene>
    <name type="primary">C5</name>
    <name type="synonym">Hc</name>
</gene>